<accession>B6EIF1</accession>
<reference key="1">
    <citation type="journal article" date="2008" name="BMC Genomics">
        <title>The genome sequence of the fish pathogen Aliivibrio salmonicida strain LFI1238 shows extensive evidence of gene decay.</title>
        <authorList>
            <person name="Hjerde E."/>
            <person name="Lorentzen M.S."/>
            <person name="Holden M.T."/>
            <person name="Seeger K."/>
            <person name="Paulsen S."/>
            <person name="Bason N."/>
            <person name="Churcher C."/>
            <person name="Harris D."/>
            <person name="Norbertczak H."/>
            <person name="Quail M.A."/>
            <person name="Sanders S."/>
            <person name="Thurston S."/>
            <person name="Parkhill J."/>
            <person name="Willassen N.P."/>
            <person name="Thomson N.R."/>
        </authorList>
    </citation>
    <scope>NUCLEOTIDE SEQUENCE [LARGE SCALE GENOMIC DNA]</scope>
    <source>
        <strain>LFI1238</strain>
    </source>
</reference>
<feature type="chain" id="PRO_1000125209" description="Glutamate 5-kinase">
    <location>
        <begin position="1"/>
        <end position="369"/>
    </location>
</feature>
<feature type="domain" description="PUA" evidence="1">
    <location>
        <begin position="277"/>
        <end position="355"/>
    </location>
</feature>
<feature type="binding site" evidence="1">
    <location>
        <position position="11"/>
    </location>
    <ligand>
        <name>ATP</name>
        <dbReference type="ChEBI" id="CHEBI:30616"/>
    </ligand>
</feature>
<feature type="binding site" evidence="1">
    <location>
        <position position="51"/>
    </location>
    <ligand>
        <name>substrate</name>
    </ligand>
</feature>
<feature type="binding site" evidence="1">
    <location>
        <position position="138"/>
    </location>
    <ligand>
        <name>substrate</name>
    </ligand>
</feature>
<feature type="binding site" evidence="1">
    <location>
        <position position="150"/>
    </location>
    <ligand>
        <name>substrate</name>
    </ligand>
</feature>
<feature type="binding site" evidence="1">
    <location>
        <begin position="170"/>
        <end position="171"/>
    </location>
    <ligand>
        <name>ATP</name>
        <dbReference type="ChEBI" id="CHEBI:30616"/>
    </ligand>
</feature>
<feature type="binding site" evidence="1">
    <location>
        <begin position="212"/>
        <end position="218"/>
    </location>
    <ligand>
        <name>ATP</name>
        <dbReference type="ChEBI" id="CHEBI:30616"/>
    </ligand>
</feature>
<dbReference type="EC" id="2.7.2.11" evidence="1"/>
<dbReference type="EMBL" id="FM178379">
    <property type="protein sequence ID" value="CAQ78662.1"/>
    <property type="molecule type" value="Genomic_DNA"/>
</dbReference>
<dbReference type="RefSeq" id="WP_012549741.1">
    <property type="nucleotide sequence ID" value="NC_011312.1"/>
</dbReference>
<dbReference type="SMR" id="B6EIF1"/>
<dbReference type="KEGG" id="vsa:VSAL_I0977"/>
<dbReference type="eggNOG" id="COG0263">
    <property type="taxonomic scope" value="Bacteria"/>
</dbReference>
<dbReference type="HOGENOM" id="CLU_025400_2_0_6"/>
<dbReference type="UniPathway" id="UPA00098">
    <property type="reaction ID" value="UER00359"/>
</dbReference>
<dbReference type="Proteomes" id="UP000001730">
    <property type="component" value="Chromosome 1"/>
</dbReference>
<dbReference type="GO" id="GO:0005829">
    <property type="term" value="C:cytosol"/>
    <property type="evidence" value="ECO:0007669"/>
    <property type="project" value="TreeGrafter"/>
</dbReference>
<dbReference type="GO" id="GO:0005524">
    <property type="term" value="F:ATP binding"/>
    <property type="evidence" value="ECO:0007669"/>
    <property type="project" value="UniProtKB-KW"/>
</dbReference>
<dbReference type="GO" id="GO:0004349">
    <property type="term" value="F:glutamate 5-kinase activity"/>
    <property type="evidence" value="ECO:0007669"/>
    <property type="project" value="UniProtKB-UniRule"/>
</dbReference>
<dbReference type="GO" id="GO:0003723">
    <property type="term" value="F:RNA binding"/>
    <property type="evidence" value="ECO:0007669"/>
    <property type="project" value="InterPro"/>
</dbReference>
<dbReference type="GO" id="GO:0055129">
    <property type="term" value="P:L-proline biosynthetic process"/>
    <property type="evidence" value="ECO:0007669"/>
    <property type="project" value="UniProtKB-UniRule"/>
</dbReference>
<dbReference type="CDD" id="cd04242">
    <property type="entry name" value="AAK_G5K_ProB"/>
    <property type="match status" value="1"/>
</dbReference>
<dbReference type="CDD" id="cd21157">
    <property type="entry name" value="PUA_G5K"/>
    <property type="match status" value="1"/>
</dbReference>
<dbReference type="FunFam" id="2.30.130.10:FF:000003">
    <property type="entry name" value="Glutamate 5-kinase"/>
    <property type="match status" value="1"/>
</dbReference>
<dbReference type="FunFam" id="3.40.1160.10:FF:000006">
    <property type="entry name" value="Glutamate 5-kinase"/>
    <property type="match status" value="1"/>
</dbReference>
<dbReference type="Gene3D" id="3.40.1160.10">
    <property type="entry name" value="Acetylglutamate kinase-like"/>
    <property type="match status" value="2"/>
</dbReference>
<dbReference type="Gene3D" id="2.30.130.10">
    <property type="entry name" value="PUA domain"/>
    <property type="match status" value="1"/>
</dbReference>
<dbReference type="HAMAP" id="MF_00456">
    <property type="entry name" value="ProB"/>
    <property type="match status" value="1"/>
</dbReference>
<dbReference type="InterPro" id="IPR036393">
    <property type="entry name" value="AceGlu_kinase-like_sf"/>
</dbReference>
<dbReference type="InterPro" id="IPR001048">
    <property type="entry name" value="Asp/Glu/Uridylate_kinase"/>
</dbReference>
<dbReference type="InterPro" id="IPR041739">
    <property type="entry name" value="G5K_ProB"/>
</dbReference>
<dbReference type="InterPro" id="IPR001057">
    <property type="entry name" value="Glu/AcGlu_kinase"/>
</dbReference>
<dbReference type="InterPro" id="IPR011529">
    <property type="entry name" value="Glu_5kinase"/>
</dbReference>
<dbReference type="InterPro" id="IPR005715">
    <property type="entry name" value="Glu_5kinase/COase_Synthase"/>
</dbReference>
<dbReference type="InterPro" id="IPR019797">
    <property type="entry name" value="Glutamate_5-kinase_CS"/>
</dbReference>
<dbReference type="InterPro" id="IPR002478">
    <property type="entry name" value="PUA"/>
</dbReference>
<dbReference type="InterPro" id="IPR015947">
    <property type="entry name" value="PUA-like_sf"/>
</dbReference>
<dbReference type="InterPro" id="IPR036974">
    <property type="entry name" value="PUA_sf"/>
</dbReference>
<dbReference type="NCBIfam" id="TIGR01027">
    <property type="entry name" value="proB"/>
    <property type="match status" value="1"/>
</dbReference>
<dbReference type="PANTHER" id="PTHR43654">
    <property type="entry name" value="GLUTAMATE 5-KINASE"/>
    <property type="match status" value="1"/>
</dbReference>
<dbReference type="PANTHER" id="PTHR43654:SF1">
    <property type="entry name" value="ISOPENTENYL PHOSPHATE KINASE"/>
    <property type="match status" value="1"/>
</dbReference>
<dbReference type="Pfam" id="PF00696">
    <property type="entry name" value="AA_kinase"/>
    <property type="match status" value="1"/>
</dbReference>
<dbReference type="Pfam" id="PF01472">
    <property type="entry name" value="PUA"/>
    <property type="match status" value="1"/>
</dbReference>
<dbReference type="PIRSF" id="PIRSF000729">
    <property type="entry name" value="GK"/>
    <property type="match status" value="1"/>
</dbReference>
<dbReference type="PRINTS" id="PR00474">
    <property type="entry name" value="GLU5KINASE"/>
</dbReference>
<dbReference type="SMART" id="SM00359">
    <property type="entry name" value="PUA"/>
    <property type="match status" value="1"/>
</dbReference>
<dbReference type="SUPFAM" id="SSF53633">
    <property type="entry name" value="Carbamate kinase-like"/>
    <property type="match status" value="1"/>
</dbReference>
<dbReference type="SUPFAM" id="SSF88697">
    <property type="entry name" value="PUA domain-like"/>
    <property type="match status" value="1"/>
</dbReference>
<dbReference type="PROSITE" id="PS00902">
    <property type="entry name" value="GLUTAMATE_5_KINASE"/>
    <property type="match status" value="1"/>
</dbReference>
<dbReference type="PROSITE" id="PS50890">
    <property type="entry name" value="PUA"/>
    <property type="match status" value="1"/>
</dbReference>
<evidence type="ECO:0000255" key="1">
    <source>
        <dbReference type="HAMAP-Rule" id="MF_00456"/>
    </source>
</evidence>
<comment type="function">
    <text evidence="1">Catalyzes the transfer of a phosphate group to glutamate to form L-glutamate 5-phosphate.</text>
</comment>
<comment type="catalytic activity">
    <reaction evidence="1">
        <text>L-glutamate + ATP = L-glutamyl 5-phosphate + ADP</text>
        <dbReference type="Rhea" id="RHEA:14877"/>
        <dbReference type="ChEBI" id="CHEBI:29985"/>
        <dbReference type="ChEBI" id="CHEBI:30616"/>
        <dbReference type="ChEBI" id="CHEBI:58274"/>
        <dbReference type="ChEBI" id="CHEBI:456216"/>
        <dbReference type="EC" id="2.7.2.11"/>
    </reaction>
</comment>
<comment type="pathway">
    <text evidence="1">Amino-acid biosynthesis; L-proline biosynthesis; L-glutamate 5-semialdehyde from L-glutamate: step 1/2.</text>
</comment>
<comment type="subcellular location">
    <subcellularLocation>
        <location evidence="1">Cytoplasm</location>
    </subcellularLocation>
</comment>
<comment type="similarity">
    <text evidence="1">Belongs to the glutamate 5-kinase family.</text>
</comment>
<name>PROB_ALISL</name>
<keyword id="KW-0028">Amino-acid biosynthesis</keyword>
<keyword id="KW-0067">ATP-binding</keyword>
<keyword id="KW-0963">Cytoplasm</keyword>
<keyword id="KW-0418">Kinase</keyword>
<keyword id="KW-0547">Nucleotide-binding</keyword>
<keyword id="KW-0641">Proline biosynthesis</keyword>
<keyword id="KW-0808">Transferase</keyword>
<organism>
    <name type="scientific">Aliivibrio salmonicida (strain LFI1238)</name>
    <name type="common">Vibrio salmonicida (strain LFI1238)</name>
    <dbReference type="NCBI Taxonomy" id="316275"/>
    <lineage>
        <taxon>Bacteria</taxon>
        <taxon>Pseudomonadati</taxon>
        <taxon>Pseudomonadota</taxon>
        <taxon>Gammaproteobacteria</taxon>
        <taxon>Vibrionales</taxon>
        <taxon>Vibrionaceae</taxon>
        <taxon>Aliivibrio</taxon>
    </lineage>
</organism>
<proteinExistence type="inferred from homology"/>
<protein>
    <recommendedName>
        <fullName evidence="1">Glutamate 5-kinase</fullName>
        <ecNumber evidence="1">2.7.2.11</ecNumber>
    </recommendedName>
    <alternativeName>
        <fullName evidence="1">Gamma-glutamyl kinase</fullName>
        <shortName evidence="1">GK</shortName>
    </alternativeName>
</protein>
<gene>
    <name evidence="1" type="primary">proB</name>
    <name type="ordered locus">VSAL_I0977</name>
</gene>
<sequence length="369" mass="39303">MNTQSQTIVVKLGTSVLTGGTLKLDRAHMVELVRQCVHLKKLGHQVIVVTSGAIAAGREHLNYPELPKTMANKQLLAAVGQSCLIQAWQSLFAIYGVNVGQMLLTRADLDDRERYLNARDMLQALLKNGIVPIVNENDAVATNEIKVGDNDNLSALVGILASADKLLLLTDQSGLFTADPRKDPKAELIKEVHTIDETLRKIAGGSGTALGTGGMATKLQAADIARRAGIEVVIAAGSAENVITDVVDSKPQGTKFLPVECALESRKRWILAGPASNGTIVIDDGAVNAVQQKGSSLLSKGISSISGHFVRGGVAKIVNTKGELIARGISRYSSDDLHKILGKHSQDIYAVLGYEYGPVAIHRDDLVLI</sequence>